<proteinExistence type="inferred from homology"/>
<protein>
    <recommendedName>
        <fullName>Uncharacterized protein RBE_0210</fullName>
    </recommendedName>
</protein>
<reference key="1">
    <citation type="journal article" date="2006" name="PLoS Genet.">
        <title>Genome sequence of Rickettsia bellii illuminates the role of amoebae in gene exchanges between intracellular pathogens.</title>
        <authorList>
            <person name="Ogata H."/>
            <person name="La Scola B."/>
            <person name="Audic S."/>
            <person name="Renesto P."/>
            <person name="Blanc G."/>
            <person name="Robert C."/>
            <person name="Fournier P.-E."/>
            <person name="Claverie J.-M."/>
            <person name="Raoult D."/>
        </authorList>
    </citation>
    <scope>NUCLEOTIDE SEQUENCE [LARGE SCALE GENOMIC DNA]</scope>
    <source>
        <strain>RML369-C</strain>
    </source>
</reference>
<keyword id="KW-0732">Signal</keyword>
<organism>
    <name type="scientific">Rickettsia bellii (strain RML369-C)</name>
    <dbReference type="NCBI Taxonomy" id="336407"/>
    <lineage>
        <taxon>Bacteria</taxon>
        <taxon>Pseudomonadati</taxon>
        <taxon>Pseudomonadota</taxon>
        <taxon>Alphaproteobacteria</taxon>
        <taxon>Rickettsiales</taxon>
        <taxon>Rickettsiaceae</taxon>
        <taxon>Rickettsieae</taxon>
        <taxon>Rickettsia</taxon>
        <taxon>belli group</taxon>
    </lineage>
</organism>
<evidence type="ECO:0000255" key="1"/>
<accession>Q1RK23</accession>
<dbReference type="EMBL" id="CP000087">
    <property type="protein sequence ID" value="ABE04291.1"/>
    <property type="molecule type" value="Genomic_DNA"/>
</dbReference>
<dbReference type="RefSeq" id="WP_011476904.1">
    <property type="nucleotide sequence ID" value="NC_007940.1"/>
</dbReference>
<dbReference type="SMR" id="Q1RK23"/>
<dbReference type="KEGG" id="rbe:RBE_0210"/>
<dbReference type="eggNOG" id="COG0760">
    <property type="taxonomic scope" value="Bacteria"/>
</dbReference>
<dbReference type="HOGENOM" id="CLU_942947_0_0_5"/>
<dbReference type="OrthoDB" id="9791746at2"/>
<dbReference type="Proteomes" id="UP000001951">
    <property type="component" value="Chromosome"/>
</dbReference>
<dbReference type="Gene3D" id="1.10.4030.10">
    <property type="entry name" value="Porin chaperone SurA, peptide-binding domain"/>
    <property type="match status" value="1"/>
</dbReference>
<dbReference type="InterPro" id="IPR050280">
    <property type="entry name" value="OMP_Chaperone_SurA"/>
</dbReference>
<dbReference type="InterPro" id="IPR027304">
    <property type="entry name" value="Trigger_fact/SurA_dom_sf"/>
</dbReference>
<dbReference type="PANTHER" id="PTHR47637">
    <property type="entry name" value="CHAPERONE SURA"/>
    <property type="match status" value="1"/>
</dbReference>
<dbReference type="PANTHER" id="PTHR47637:SF1">
    <property type="entry name" value="CHAPERONE SURA"/>
    <property type="match status" value="1"/>
</dbReference>
<dbReference type="Pfam" id="PF13624">
    <property type="entry name" value="SurA_N_3"/>
    <property type="match status" value="1"/>
</dbReference>
<dbReference type="SUPFAM" id="SSF109998">
    <property type="entry name" value="Triger factor/SurA peptide-binding domain-like"/>
    <property type="match status" value="1"/>
</dbReference>
<name>Y210_RICBR</name>
<feature type="signal peptide" evidence="1">
    <location>
        <begin position="1"/>
        <end position="18"/>
    </location>
</feature>
<feature type="chain" id="PRO_0000277651" description="Uncharacterized protein RBE_0210">
    <location>
        <begin position="19"/>
        <end position="294"/>
    </location>
</feature>
<sequence>MKKLLLIITVFFTCSAVAETSNIVALVNNEPITLNEFRARKKMIMALNNVEEVTPAQNKQLSDIAIKSLIDESLLFQYYGDKEISQEEIDNAIKSIEDRNKMPHGSLLQYLKSRSVNPDSFISQIKSELIKMNVLSGLSRSVQVSNKEIDVAILSSDQKEVEVSMQIFTSKDKSDKTFAQMNNLKSKLKNCSDVKKSLYENFATMTVITDKLSKIEEAKQTIVKDLNPNQTSNVFEKYNEFEIVQVCTKKILNISEDENNYVVNFLTNKKISQKAQKFFEDMHKKAYIKITLPS</sequence>
<gene>
    <name type="ordered locus">RBE_0210</name>
</gene>